<comment type="function">
    <text evidence="1 3">Stores iron in a soluble, non-toxic, readily available form. Important for iron homeostasis. Iron is taken up in the ferrous form and deposited as ferric hydroxides after oxidation. Also plays a role in delivery of iron to cells. Mediates iron uptake in capsule cells of the developing kidney (By similarity). Delivery to lysosomes by the cargo receptor NCOA4 for autophagic degradation and release or iron (By similarity).</text>
</comment>
<comment type="subunit">
    <text evidence="1 3">Oligomer of 24 subunits. There are two types of subunits: L (light) chain and H (heavy) chain. The major chain can be light or heavy, depending on the species and tissue type. The functional molecule forms a roughly spherical shell with a diameter of 12 nm and contains a central cavity into which the insoluble mineral iron core is deposited (By similarity). Interacts with NCOA4 (By similarity).</text>
</comment>
<comment type="subcellular location">
    <subcellularLocation>
        <location evidence="3">Cytoplasmic vesicle</location>
        <location evidence="3">Autophagosome</location>
    </subcellularLocation>
    <subcellularLocation>
        <location evidence="4">Cytoplasm</location>
    </subcellularLocation>
    <subcellularLocation>
        <location evidence="4">Autolysosome</location>
    </subcellularLocation>
</comment>
<comment type="similarity">
    <text evidence="6">Belongs to the ferritin family.</text>
</comment>
<evidence type="ECO:0000250" key="1"/>
<evidence type="ECO:0000250" key="2">
    <source>
        <dbReference type="UniProtKB" id="P02791"/>
    </source>
</evidence>
<evidence type="ECO:0000250" key="3">
    <source>
        <dbReference type="UniProtKB" id="P02792"/>
    </source>
</evidence>
<evidence type="ECO:0000250" key="4">
    <source>
        <dbReference type="UniProtKB" id="P29391"/>
    </source>
</evidence>
<evidence type="ECO:0000255" key="5">
    <source>
        <dbReference type="PROSITE-ProRule" id="PRU00085"/>
    </source>
</evidence>
<evidence type="ECO:0000305" key="6"/>
<accession>Q53VB8</accession>
<dbReference type="EMBL" id="AB175612">
    <property type="protein sequence ID" value="BAD96177.1"/>
    <property type="molecule type" value="mRNA"/>
</dbReference>
<dbReference type="EMBL" id="AB175613">
    <property type="protein sequence ID" value="BAD96178.1"/>
    <property type="molecule type" value="mRNA"/>
</dbReference>
<dbReference type="EMBL" id="AB175614">
    <property type="protein sequence ID" value="BAD96179.1"/>
    <property type="molecule type" value="mRNA"/>
</dbReference>
<dbReference type="RefSeq" id="NP_001019807.1">
    <property type="nucleotide sequence ID" value="NM_001024636.2"/>
</dbReference>
<dbReference type="RefSeq" id="XP_005634393.1">
    <property type="nucleotide sequence ID" value="XM_005634336.2"/>
</dbReference>
<dbReference type="SMR" id="Q53VB8"/>
<dbReference type="FunCoup" id="Q53VB8">
    <property type="interactions" value="20"/>
</dbReference>
<dbReference type="STRING" id="9615.ENSCAFP00000005761"/>
<dbReference type="PaxDb" id="9612-ENSCAFP00000005761"/>
<dbReference type="Ensembl" id="ENSCAFT00000006220.5">
    <property type="protein sequence ID" value="ENSCAFP00000005761.3"/>
    <property type="gene ID" value="ENSCAFG00000003861.5"/>
</dbReference>
<dbReference type="Ensembl" id="ENSCAFT00030026497.1">
    <property type="protein sequence ID" value="ENSCAFP00030023130.1"/>
    <property type="gene ID" value="ENSCAFG00030014341.1"/>
</dbReference>
<dbReference type="Ensembl" id="ENSCAFT00845000775.1">
    <property type="protein sequence ID" value="ENSCAFP00845000573.1"/>
    <property type="gene ID" value="ENSCAFG00845000481.1"/>
</dbReference>
<dbReference type="GeneID" id="477042"/>
<dbReference type="KEGG" id="cfa:477042"/>
<dbReference type="CTD" id="2512"/>
<dbReference type="VEuPathDB" id="HostDB:ENSCAFG00845000481"/>
<dbReference type="eggNOG" id="KOG2332">
    <property type="taxonomic scope" value="Eukaryota"/>
</dbReference>
<dbReference type="GeneTree" id="ENSGT00940000153096"/>
<dbReference type="HOGENOM" id="CLU_065681_4_0_1"/>
<dbReference type="InParanoid" id="Q53VB8"/>
<dbReference type="OMA" id="CARADPH"/>
<dbReference type="OrthoDB" id="186462at2759"/>
<dbReference type="TreeFam" id="TF313885"/>
<dbReference type="Reactome" id="R-CFA-432722">
    <property type="pathway name" value="Golgi Associated Vesicle Biogenesis"/>
</dbReference>
<dbReference type="Reactome" id="R-CFA-6798695">
    <property type="pathway name" value="Neutrophil degranulation"/>
</dbReference>
<dbReference type="Reactome" id="R-CFA-917937">
    <property type="pathway name" value="Iron uptake and transport"/>
</dbReference>
<dbReference type="Proteomes" id="UP000002254">
    <property type="component" value="Chromosome 1"/>
</dbReference>
<dbReference type="Proteomes" id="UP000694429">
    <property type="component" value="Chromosome 1"/>
</dbReference>
<dbReference type="Proteomes" id="UP000694542">
    <property type="component" value="Unplaced"/>
</dbReference>
<dbReference type="Proteomes" id="UP000805418">
    <property type="component" value="Chromosome 1"/>
</dbReference>
<dbReference type="Bgee" id="ENSCAFG00000003861">
    <property type="expression patterns" value="Expressed in cartilage tissue and 47 other cell types or tissues"/>
</dbReference>
<dbReference type="GO" id="GO:0044754">
    <property type="term" value="C:autolysosome"/>
    <property type="evidence" value="ECO:0007669"/>
    <property type="project" value="UniProtKB-SubCell"/>
</dbReference>
<dbReference type="GO" id="GO:0005776">
    <property type="term" value="C:autophagosome"/>
    <property type="evidence" value="ECO:0007669"/>
    <property type="project" value="UniProtKB-SubCell"/>
</dbReference>
<dbReference type="GO" id="GO:0005737">
    <property type="term" value="C:cytoplasm"/>
    <property type="evidence" value="ECO:0000318"/>
    <property type="project" value="GO_Central"/>
</dbReference>
<dbReference type="GO" id="GO:0031410">
    <property type="term" value="C:cytoplasmic vesicle"/>
    <property type="evidence" value="ECO:0007669"/>
    <property type="project" value="UniProtKB-KW"/>
</dbReference>
<dbReference type="GO" id="GO:0070288">
    <property type="term" value="C:ferritin complex"/>
    <property type="evidence" value="ECO:0000250"/>
    <property type="project" value="UniProtKB"/>
</dbReference>
<dbReference type="GO" id="GO:0008199">
    <property type="term" value="F:ferric iron binding"/>
    <property type="evidence" value="ECO:0000318"/>
    <property type="project" value="GO_Central"/>
</dbReference>
<dbReference type="GO" id="GO:0008198">
    <property type="term" value="F:ferrous iron binding"/>
    <property type="evidence" value="ECO:0000318"/>
    <property type="project" value="GO_Central"/>
</dbReference>
<dbReference type="GO" id="GO:0005506">
    <property type="term" value="F:iron ion binding"/>
    <property type="evidence" value="ECO:0000250"/>
    <property type="project" value="UniProtKB"/>
</dbReference>
<dbReference type="GO" id="GO:0006879">
    <property type="term" value="P:intracellular iron ion homeostasis"/>
    <property type="evidence" value="ECO:0007669"/>
    <property type="project" value="UniProtKB-KW"/>
</dbReference>
<dbReference type="GO" id="GO:0006826">
    <property type="term" value="P:iron ion transport"/>
    <property type="evidence" value="ECO:0007669"/>
    <property type="project" value="InterPro"/>
</dbReference>
<dbReference type="CDD" id="cd00904">
    <property type="entry name" value="Ferritin"/>
    <property type="match status" value="1"/>
</dbReference>
<dbReference type="FunFam" id="1.20.1260.10:FF:000009">
    <property type="entry name" value="Ferritin light chain"/>
    <property type="match status" value="1"/>
</dbReference>
<dbReference type="Gene3D" id="1.20.1260.10">
    <property type="match status" value="1"/>
</dbReference>
<dbReference type="InterPro" id="IPR001519">
    <property type="entry name" value="Ferritin"/>
</dbReference>
<dbReference type="InterPro" id="IPR012347">
    <property type="entry name" value="Ferritin-like"/>
</dbReference>
<dbReference type="InterPro" id="IPR009040">
    <property type="entry name" value="Ferritin-like_diiron"/>
</dbReference>
<dbReference type="InterPro" id="IPR009078">
    <property type="entry name" value="Ferritin-like_SF"/>
</dbReference>
<dbReference type="InterPro" id="IPR014034">
    <property type="entry name" value="Ferritin_CS"/>
</dbReference>
<dbReference type="InterPro" id="IPR008331">
    <property type="entry name" value="Ferritin_DPS_dom"/>
</dbReference>
<dbReference type="PANTHER" id="PTHR11431">
    <property type="entry name" value="FERRITIN"/>
    <property type="match status" value="1"/>
</dbReference>
<dbReference type="PANTHER" id="PTHR11431:SF47">
    <property type="entry name" value="FERRITIN LIGHT CHAIN"/>
    <property type="match status" value="1"/>
</dbReference>
<dbReference type="Pfam" id="PF00210">
    <property type="entry name" value="Ferritin"/>
    <property type="match status" value="1"/>
</dbReference>
<dbReference type="SUPFAM" id="SSF47240">
    <property type="entry name" value="Ferritin-like"/>
    <property type="match status" value="1"/>
</dbReference>
<dbReference type="PROSITE" id="PS00540">
    <property type="entry name" value="FERRITIN_1"/>
    <property type="match status" value="1"/>
</dbReference>
<dbReference type="PROSITE" id="PS00204">
    <property type="entry name" value="FERRITIN_2"/>
    <property type="match status" value="1"/>
</dbReference>
<dbReference type="PROSITE" id="PS50905">
    <property type="entry name" value="FERRITIN_LIKE"/>
    <property type="match status" value="1"/>
</dbReference>
<feature type="initiator methionine" description="Removed" evidence="2">
    <location>
        <position position="1"/>
    </location>
</feature>
<feature type="chain" id="PRO_0000252365" description="Ferritin light chain">
    <location>
        <begin position="2"/>
        <end position="175"/>
    </location>
</feature>
<feature type="domain" description="Ferritin-like diiron" evidence="5">
    <location>
        <begin position="7"/>
        <end position="156"/>
    </location>
</feature>
<feature type="binding site" evidence="5">
    <location>
        <position position="54"/>
    </location>
    <ligand>
        <name>Fe cation</name>
        <dbReference type="ChEBI" id="CHEBI:24875"/>
    </ligand>
</feature>
<feature type="binding site" evidence="5">
    <location>
        <position position="57"/>
    </location>
    <ligand>
        <name>Fe cation</name>
        <dbReference type="ChEBI" id="CHEBI:24875"/>
    </ligand>
</feature>
<feature type="binding site" evidence="5">
    <location>
        <position position="58"/>
    </location>
    <ligand>
        <name>Fe cation</name>
        <dbReference type="ChEBI" id="CHEBI:24875"/>
    </ligand>
</feature>
<feature type="binding site" evidence="5">
    <location>
        <position position="61"/>
    </location>
    <ligand>
        <name>Fe cation</name>
        <dbReference type="ChEBI" id="CHEBI:24875"/>
    </ligand>
</feature>
<feature type="binding site" evidence="5">
    <location>
        <position position="64"/>
    </location>
    <ligand>
        <name>Fe cation</name>
        <dbReference type="ChEBI" id="CHEBI:24875"/>
    </ligand>
</feature>
<feature type="modified residue" description="N-acetylserine" evidence="2">
    <location>
        <position position="2"/>
    </location>
</feature>
<name>FRIL_CANLF</name>
<organism>
    <name type="scientific">Canis lupus familiaris</name>
    <name type="common">Dog</name>
    <name type="synonym">Canis familiaris</name>
    <dbReference type="NCBI Taxonomy" id="9615"/>
    <lineage>
        <taxon>Eukaryota</taxon>
        <taxon>Metazoa</taxon>
        <taxon>Chordata</taxon>
        <taxon>Craniata</taxon>
        <taxon>Vertebrata</taxon>
        <taxon>Euteleostomi</taxon>
        <taxon>Mammalia</taxon>
        <taxon>Eutheria</taxon>
        <taxon>Laurasiatheria</taxon>
        <taxon>Carnivora</taxon>
        <taxon>Caniformia</taxon>
        <taxon>Canidae</taxon>
        <taxon>Canis</taxon>
    </lineage>
</organism>
<reference key="1">
    <citation type="journal article" date="2005" name="DNA Seq.">
        <title>Sequence analysis of canine and equine ferritin H and L subunit cDNAs.</title>
        <authorList>
            <person name="Orino K."/>
            <person name="Miura T."/>
            <person name="Muto S."/>
            <person name="Watanabe K."/>
        </authorList>
    </citation>
    <scope>NUCLEOTIDE SEQUENCE [MRNA]</scope>
    <source>
        <tissue>Kidney</tissue>
        <tissue>Liver</tissue>
        <tissue>Spleen</tissue>
    </source>
</reference>
<proteinExistence type="evidence at transcript level"/>
<gene>
    <name type="primary">FTL</name>
</gene>
<sequence length="175" mass="20095">MSSQIRQNYSTEVEAAVNRLVNMHLRASYTYLSLGFYFDRDDVALEGVGHFFRELAEEKREGAERFLKMQNQRGGRALFQDVQKPSQDEWGKTLDAMEAALLLEKSLNQALLDLHALGSARADPHLCDFLENHFLDEEVKLIKKMGDHLTNLRRLATPQAGLGEYLFERLTLKHD</sequence>
<protein>
    <recommendedName>
        <fullName>Ferritin light chain</fullName>
        <shortName>Ferritin L subunit</shortName>
    </recommendedName>
</protein>
<keyword id="KW-0007">Acetylation</keyword>
<keyword id="KW-0963">Cytoplasm</keyword>
<keyword id="KW-0968">Cytoplasmic vesicle</keyword>
<keyword id="KW-0408">Iron</keyword>
<keyword id="KW-0409">Iron storage</keyword>
<keyword id="KW-0458">Lysosome</keyword>
<keyword id="KW-0479">Metal-binding</keyword>
<keyword id="KW-1185">Reference proteome</keyword>